<protein>
    <recommendedName>
        <fullName evidence="1">Small ribosomal subunit protein bS21</fullName>
    </recommendedName>
    <alternativeName>
        <fullName evidence="2">30S ribosomal protein S21</fullName>
    </alternativeName>
</protein>
<feature type="chain" id="PRO_1000005094" description="Small ribosomal subunit protein bS21">
    <location>
        <begin position="1"/>
        <end position="70"/>
    </location>
</feature>
<accession>A1KAI5</accession>
<sequence>MPGIRVKENEPFEVAIRRFKRTIEKTGVLTELRSREFYEKPTAERKRKLAAAVKRNHKRLRSQMLPPKLY</sequence>
<organism>
    <name type="scientific">Azoarcus sp. (strain BH72)</name>
    <dbReference type="NCBI Taxonomy" id="418699"/>
    <lineage>
        <taxon>Bacteria</taxon>
        <taxon>Pseudomonadati</taxon>
        <taxon>Pseudomonadota</taxon>
        <taxon>Betaproteobacteria</taxon>
        <taxon>Rhodocyclales</taxon>
        <taxon>Zoogloeaceae</taxon>
        <taxon>Azoarcus</taxon>
    </lineage>
</organism>
<proteinExistence type="inferred from homology"/>
<gene>
    <name evidence="1" type="primary">rpsU</name>
    <name type="ordered locus">azo3225</name>
</gene>
<keyword id="KW-1185">Reference proteome</keyword>
<keyword id="KW-0687">Ribonucleoprotein</keyword>
<keyword id="KW-0689">Ribosomal protein</keyword>
<reference key="1">
    <citation type="journal article" date="2006" name="Nat. Biotechnol.">
        <title>Complete genome of the mutualistic, N2-fixing grass endophyte Azoarcus sp. strain BH72.</title>
        <authorList>
            <person name="Krause A."/>
            <person name="Ramakumar A."/>
            <person name="Bartels D."/>
            <person name="Battistoni F."/>
            <person name="Bekel T."/>
            <person name="Boch J."/>
            <person name="Boehm M."/>
            <person name="Friedrich F."/>
            <person name="Hurek T."/>
            <person name="Krause L."/>
            <person name="Linke B."/>
            <person name="McHardy A.C."/>
            <person name="Sarkar A."/>
            <person name="Schneiker S."/>
            <person name="Syed A.A."/>
            <person name="Thauer R."/>
            <person name="Vorhoelter F.-J."/>
            <person name="Weidner S."/>
            <person name="Puehler A."/>
            <person name="Reinhold-Hurek B."/>
            <person name="Kaiser O."/>
            <person name="Goesmann A."/>
        </authorList>
    </citation>
    <scope>NUCLEOTIDE SEQUENCE [LARGE SCALE GENOMIC DNA]</scope>
    <source>
        <strain>BH72</strain>
    </source>
</reference>
<comment type="similarity">
    <text evidence="1">Belongs to the bacterial ribosomal protein bS21 family.</text>
</comment>
<name>RS21_AZOSB</name>
<evidence type="ECO:0000255" key="1">
    <source>
        <dbReference type="HAMAP-Rule" id="MF_00358"/>
    </source>
</evidence>
<evidence type="ECO:0000305" key="2"/>
<dbReference type="EMBL" id="AM406670">
    <property type="protein sequence ID" value="CAL95841.1"/>
    <property type="molecule type" value="Genomic_DNA"/>
</dbReference>
<dbReference type="RefSeq" id="WP_004260978.1">
    <property type="nucleotide sequence ID" value="NZ_CP016210.1"/>
</dbReference>
<dbReference type="SMR" id="A1KAI5"/>
<dbReference type="STRING" id="62928.azo3225"/>
<dbReference type="KEGG" id="aoa:dqs_3362"/>
<dbReference type="KEGG" id="azo:azo3225"/>
<dbReference type="eggNOG" id="COG0828">
    <property type="taxonomic scope" value="Bacteria"/>
</dbReference>
<dbReference type="HOGENOM" id="CLU_159258_1_2_4"/>
<dbReference type="OrthoDB" id="9799244at2"/>
<dbReference type="Proteomes" id="UP000002588">
    <property type="component" value="Chromosome"/>
</dbReference>
<dbReference type="GO" id="GO:1990904">
    <property type="term" value="C:ribonucleoprotein complex"/>
    <property type="evidence" value="ECO:0007669"/>
    <property type="project" value="UniProtKB-KW"/>
</dbReference>
<dbReference type="GO" id="GO:0005840">
    <property type="term" value="C:ribosome"/>
    <property type="evidence" value="ECO:0007669"/>
    <property type="project" value="UniProtKB-KW"/>
</dbReference>
<dbReference type="GO" id="GO:0003735">
    <property type="term" value="F:structural constituent of ribosome"/>
    <property type="evidence" value="ECO:0007669"/>
    <property type="project" value="InterPro"/>
</dbReference>
<dbReference type="GO" id="GO:0006412">
    <property type="term" value="P:translation"/>
    <property type="evidence" value="ECO:0007669"/>
    <property type="project" value="UniProtKB-UniRule"/>
</dbReference>
<dbReference type="Gene3D" id="1.20.5.1150">
    <property type="entry name" value="Ribosomal protein S8"/>
    <property type="match status" value="1"/>
</dbReference>
<dbReference type="HAMAP" id="MF_00358">
    <property type="entry name" value="Ribosomal_bS21"/>
    <property type="match status" value="1"/>
</dbReference>
<dbReference type="InterPro" id="IPR001911">
    <property type="entry name" value="Ribosomal_bS21"/>
</dbReference>
<dbReference type="InterPro" id="IPR018278">
    <property type="entry name" value="Ribosomal_bS21_CS"/>
</dbReference>
<dbReference type="InterPro" id="IPR038380">
    <property type="entry name" value="Ribosomal_bS21_sf"/>
</dbReference>
<dbReference type="NCBIfam" id="TIGR00030">
    <property type="entry name" value="S21p"/>
    <property type="match status" value="1"/>
</dbReference>
<dbReference type="PANTHER" id="PTHR21109">
    <property type="entry name" value="MITOCHONDRIAL 28S RIBOSOMAL PROTEIN S21"/>
    <property type="match status" value="1"/>
</dbReference>
<dbReference type="PANTHER" id="PTHR21109:SF22">
    <property type="entry name" value="SMALL RIBOSOMAL SUBUNIT PROTEIN BS21"/>
    <property type="match status" value="1"/>
</dbReference>
<dbReference type="Pfam" id="PF01165">
    <property type="entry name" value="Ribosomal_S21"/>
    <property type="match status" value="1"/>
</dbReference>
<dbReference type="PRINTS" id="PR00976">
    <property type="entry name" value="RIBOSOMALS21"/>
</dbReference>
<dbReference type="PROSITE" id="PS01181">
    <property type="entry name" value="RIBOSOMAL_S21"/>
    <property type="match status" value="1"/>
</dbReference>